<proteinExistence type="inferred from homology"/>
<accession>B2TPC6</accession>
<sequence length="145" mass="16133">MKGNYLVIDKRVLPDVYEKVVFAQKLLKDGKVKEITEATKIAGISRSVYYKYKDYIFDFAETSQGKKVTFNLIVKDQTGVLSGIINYISEQGGNILTINQGIPLNGVANISVTIDMSTLIGDIKTLLNGLSDIQYVEKIEFVAME</sequence>
<evidence type="ECO:0000255" key="1">
    <source>
        <dbReference type="HAMAP-Rule" id="MF_00707"/>
    </source>
</evidence>
<organism>
    <name type="scientific">Clostridium botulinum (strain Eklund 17B / Type B)</name>
    <dbReference type="NCBI Taxonomy" id="935198"/>
    <lineage>
        <taxon>Bacteria</taxon>
        <taxon>Bacillati</taxon>
        <taxon>Bacillota</taxon>
        <taxon>Clostridia</taxon>
        <taxon>Eubacteriales</taxon>
        <taxon>Clostridiaceae</taxon>
        <taxon>Clostridium</taxon>
    </lineage>
</organism>
<gene>
    <name type="ordered locus">CLL_A2896</name>
</gene>
<dbReference type="EMBL" id="CP001056">
    <property type="protein sequence ID" value="ACD22408.1"/>
    <property type="molecule type" value="Genomic_DNA"/>
</dbReference>
<dbReference type="KEGG" id="cbk:CLL_A2896"/>
<dbReference type="PATRIC" id="fig|935198.13.peg.2858"/>
<dbReference type="HOGENOM" id="CLU_128147_0_0_9"/>
<dbReference type="Proteomes" id="UP000001195">
    <property type="component" value="Chromosome"/>
</dbReference>
<dbReference type="CDD" id="cd04888">
    <property type="entry name" value="ACT_PheB-BS"/>
    <property type="match status" value="1"/>
</dbReference>
<dbReference type="Gene3D" id="3.30.70.260">
    <property type="match status" value="1"/>
</dbReference>
<dbReference type="HAMAP" id="MF_00707">
    <property type="entry name" value="UPF0735"/>
    <property type="match status" value="1"/>
</dbReference>
<dbReference type="InterPro" id="IPR045865">
    <property type="entry name" value="ACT-like_dom_sf"/>
</dbReference>
<dbReference type="InterPro" id="IPR002912">
    <property type="entry name" value="ACT_dom"/>
</dbReference>
<dbReference type="InterPro" id="IPR008310">
    <property type="entry name" value="UPF0735_ACT_dom-cont"/>
</dbReference>
<dbReference type="NCBIfam" id="NF003361">
    <property type="entry name" value="PRK04435.1"/>
    <property type="match status" value="1"/>
</dbReference>
<dbReference type="Pfam" id="PF13291">
    <property type="entry name" value="ACT_4"/>
    <property type="match status" value="1"/>
</dbReference>
<dbReference type="PIRSF" id="PIRSF025624">
    <property type="entry name" value="ACT_PheB"/>
    <property type="match status" value="1"/>
</dbReference>
<dbReference type="SUPFAM" id="SSF55021">
    <property type="entry name" value="ACT-like"/>
    <property type="match status" value="1"/>
</dbReference>
<dbReference type="PROSITE" id="PS51671">
    <property type="entry name" value="ACT"/>
    <property type="match status" value="1"/>
</dbReference>
<reference key="1">
    <citation type="submission" date="2008-04" db="EMBL/GenBank/DDBJ databases">
        <title>Complete sequence of Clostridium botulinum strain Eklund.</title>
        <authorList>
            <person name="Brinkac L.M."/>
            <person name="Brown J.L."/>
            <person name="Bruce D."/>
            <person name="Detter C."/>
            <person name="Munk C."/>
            <person name="Smith L.A."/>
            <person name="Smith T.J."/>
            <person name="Sutton G."/>
            <person name="Brettin T.S."/>
        </authorList>
    </citation>
    <scope>NUCLEOTIDE SEQUENCE [LARGE SCALE GENOMIC DNA]</scope>
    <source>
        <strain>Eklund 17B / Type B</strain>
    </source>
</reference>
<name>Y2896_CLOBB</name>
<comment type="similarity">
    <text evidence="1">Belongs to the UPF0735 family.</text>
</comment>
<protein>
    <recommendedName>
        <fullName evidence="1">UPF0735 ACT domain-containing protein CLL_A2896</fullName>
    </recommendedName>
</protein>
<feature type="chain" id="PRO_0000366300" description="UPF0735 ACT domain-containing protein CLL_A2896">
    <location>
        <begin position="1"/>
        <end position="145"/>
    </location>
</feature>
<feature type="domain" description="ACT" evidence="1">
    <location>
        <begin position="69"/>
        <end position="144"/>
    </location>
</feature>